<sequence length="116" mass="13364">MRHKHGYRKLGRTSSHRKALLKNLAIALIEHNKIETGIYKAKELRSYIEKLTTAARVGDFNAHRHVFAYLQNKEATHKLVTEIAPKYAQRNGGYTRIQRTTFRRGDASTLATIEFV</sequence>
<protein>
    <recommendedName>
        <fullName evidence="1">Large ribosomal subunit protein bL17</fullName>
    </recommendedName>
    <alternativeName>
        <fullName evidence="2">50S ribosomal protein L17</fullName>
    </alternativeName>
</protein>
<evidence type="ECO:0000255" key="1">
    <source>
        <dbReference type="HAMAP-Rule" id="MF_01368"/>
    </source>
</evidence>
<evidence type="ECO:0000305" key="2"/>
<keyword id="KW-0687">Ribonucleoprotein</keyword>
<keyword id="KW-0689">Ribosomal protein</keyword>
<name>RL17_HELPS</name>
<accession>B2UV55</accession>
<organism>
    <name type="scientific">Helicobacter pylori (strain Shi470)</name>
    <dbReference type="NCBI Taxonomy" id="512562"/>
    <lineage>
        <taxon>Bacteria</taxon>
        <taxon>Pseudomonadati</taxon>
        <taxon>Campylobacterota</taxon>
        <taxon>Epsilonproteobacteria</taxon>
        <taxon>Campylobacterales</taxon>
        <taxon>Helicobacteraceae</taxon>
        <taxon>Helicobacter</taxon>
    </lineage>
</organism>
<dbReference type="EMBL" id="CP001072">
    <property type="protein sequence ID" value="ACD48737.1"/>
    <property type="molecule type" value="Genomic_DNA"/>
</dbReference>
<dbReference type="RefSeq" id="WP_001216119.1">
    <property type="nucleotide sequence ID" value="NC_010698.2"/>
</dbReference>
<dbReference type="SMR" id="B2UV55"/>
<dbReference type="GeneID" id="93237577"/>
<dbReference type="KEGG" id="hps:HPSH_06685"/>
<dbReference type="HOGENOM" id="CLU_074407_2_0_7"/>
<dbReference type="GO" id="GO:0022625">
    <property type="term" value="C:cytosolic large ribosomal subunit"/>
    <property type="evidence" value="ECO:0007669"/>
    <property type="project" value="TreeGrafter"/>
</dbReference>
<dbReference type="GO" id="GO:0003735">
    <property type="term" value="F:structural constituent of ribosome"/>
    <property type="evidence" value="ECO:0007669"/>
    <property type="project" value="InterPro"/>
</dbReference>
<dbReference type="GO" id="GO:0006412">
    <property type="term" value="P:translation"/>
    <property type="evidence" value="ECO:0007669"/>
    <property type="project" value="UniProtKB-UniRule"/>
</dbReference>
<dbReference type="FunFam" id="3.90.1030.10:FF:000003">
    <property type="entry name" value="50S ribosomal protein L17"/>
    <property type="match status" value="1"/>
</dbReference>
<dbReference type="Gene3D" id="3.90.1030.10">
    <property type="entry name" value="Ribosomal protein L17"/>
    <property type="match status" value="1"/>
</dbReference>
<dbReference type="HAMAP" id="MF_01368">
    <property type="entry name" value="Ribosomal_bL17"/>
    <property type="match status" value="1"/>
</dbReference>
<dbReference type="InterPro" id="IPR000456">
    <property type="entry name" value="Ribosomal_bL17"/>
</dbReference>
<dbReference type="InterPro" id="IPR047859">
    <property type="entry name" value="Ribosomal_bL17_CS"/>
</dbReference>
<dbReference type="InterPro" id="IPR036373">
    <property type="entry name" value="Ribosomal_bL17_sf"/>
</dbReference>
<dbReference type="NCBIfam" id="TIGR00059">
    <property type="entry name" value="L17"/>
    <property type="match status" value="1"/>
</dbReference>
<dbReference type="PANTHER" id="PTHR14413:SF16">
    <property type="entry name" value="LARGE RIBOSOMAL SUBUNIT PROTEIN BL17M"/>
    <property type="match status" value="1"/>
</dbReference>
<dbReference type="PANTHER" id="PTHR14413">
    <property type="entry name" value="RIBOSOMAL PROTEIN L17"/>
    <property type="match status" value="1"/>
</dbReference>
<dbReference type="Pfam" id="PF01196">
    <property type="entry name" value="Ribosomal_L17"/>
    <property type="match status" value="1"/>
</dbReference>
<dbReference type="SUPFAM" id="SSF64263">
    <property type="entry name" value="Prokaryotic ribosomal protein L17"/>
    <property type="match status" value="1"/>
</dbReference>
<dbReference type="PROSITE" id="PS01167">
    <property type="entry name" value="RIBOSOMAL_L17"/>
    <property type="match status" value="1"/>
</dbReference>
<gene>
    <name evidence="1" type="primary">rplQ</name>
    <name type="ordered locus">HPSH_06685</name>
</gene>
<reference key="1">
    <citation type="submission" date="2008-05" db="EMBL/GenBank/DDBJ databases">
        <title>Genome sequence of Helicobacter pylori from the remote Amazon: traces of Asian ancestry of the first Americans.</title>
        <authorList>
            <person name="Kersulyte D."/>
            <person name="Kalia A."/>
            <person name="Gilman R.H."/>
            <person name="Berg D.E."/>
        </authorList>
    </citation>
    <scope>NUCLEOTIDE SEQUENCE [LARGE SCALE GENOMIC DNA]</scope>
    <source>
        <strain>Shi470</strain>
    </source>
</reference>
<feature type="chain" id="PRO_1000144435" description="Large ribosomal subunit protein bL17">
    <location>
        <begin position="1"/>
        <end position="116"/>
    </location>
</feature>
<proteinExistence type="inferred from homology"/>
<comment type="subunit">
    <text evidence="1">Part of the 50S ribosomal subunit. Contacts protein L32.</text>
</comment>
<comment type="similarity">
    <text evidence="1">Belongs to the bacterial ribosomal protein bL17 family.</text>
</comment>